<protein>
    <recommendedName>
        <fullName>Copine family protein 1</fullName>
    </recommendedName>
    <alternativeName>
        <fullName evidence="7">Atypical copine family protein 1</fullName>
    </alternativeName>
</protein>
<gene>
    <name evidence="5 10" type="primary">cpna-1</name>
    <name evidence="10" type="ORF">F31D5.3</name>
</gene>
<proteinExistence type="evidence at protein level"/>
<dbReference type="EMBL" id="BX284602">
    <property type="protein sequence ID" value="CCD64642.1"/>
    <property type="molecule type" value="Genomic_DNA"/>
</dbReference>
<dbReference type="EMBL" id="BX284602">
    <property type="protein sequence ID" value="CCD64643.1"/>
    <property type="molecule type" value="Genomic_DNA"/>
</dbReference>
<dbReference type="EMBL" id="BX284602">
    <property type="protein sequence ID" value="CCD64644.1"/>
    <property type="molecule type" value="Genomic_DNA"/>
</dbReference>
<dbReference type="RefSeq" id="NP_494736.1">
    <molecule id="H2KYS8-1"/>
    <property type="nucleotide sequence ID" value="NM_062335.8"/>
</dbReference>
<dbReference type="RefSeq" id="NP_494737.1">
    <molecule id="H2KYS8-2"/>
    <property type="nucleotide sequence ID" value="NM_062336.6"/>
</dbReference>
<dbReference type="RefSeq" id="NP_871985.1">
    <molecule id="H2KYS8-3"/>
    <property type="nucleotide sequence ID" value="NM_182185.6"/>
</dbReference>
<dbReference type="SMR" id="H2KYS8"/>
<dbReference type="FunCoup" id="H2KYS8">
    <property type="interactions" value="118"/>
</dbReference>
<dbReference type="IntAct" id="H2KYS8">
    <property type="interactions" value="2"/>
</dbReference>
<dbReference type="STRING" id="6239.F31D5.3b.1"/>
<dbReference type="PaxDb" id="6239-F31D5.3b"/>
<dbReference type="PeptideAtlas" id="H2KYS8"/>
<dbReference type="EnsemblMetazoa" id="F31D5.3a.1">
    <molecule id="H2KYS8-2"/>
    <property type="protein sequence ID" value="F31D5.3a.1"/>
    <property type="gene ID" value="WBGene00006495"/>
</dbReference>
<dbReference type="EnsemblMetazoa" id="F31D5.3b.1">
    <molecule id="H2KYS8-1"/>
    <property type="protein sequence ID" value="F31D5.3b.1"/>
    <property type="gene ID" value="WBGene00006495"/>
</dbReference>
<dbReference type="EnsemblMetazoa" id="F31D5.3c.1">
    <molecule id="H2KYS8-3"/>
    <property type="protein sequence ID" value="F31D5.3c.1"/>
    <property type="gene ID" value="WBGene00006495"/>
</dbReference>
<dbReference type="GeneID" id="173753"/>
<dbReference type="KEGG" id="cel:CELE_F31D5.3"/>
<dbReference type="UCSC" id="F31D5.3a">
    <property type="organism name" value="c. elegans"/>
</dbReference>
<dbReference type="AGR" id="WB:WBGene00006495"/>
<dbReference type="CTD" id="173753"/>
<dbReference type="WormBase" id="F31D5.3a">
    <molecule id="H2KYS8-2"/>
    <property type="protein sequence ID" value="CE19827"/>
    <property type="gene ID" value="WBGene00006495"/>
    <property type="gene designation" value="cpna-1"/>
</dbReference>
<dbReference type="WormBase" id="F31D5.3b">
    <molecule id="H2KYS8-1"/>
    <property type="protein sequence ID" value="CE19828"/>
    <property type="gene ID" value="WBGene00006495"/>
    <property type="gene designation" value="cpna-1"/>
</dbReference>
<dbReference type="WormBase" id="F31D5.3c">
    <molecule id="H2KYS8-3"/>
    <property type="protein sequence ID" value="CE31797"/>
    <property type="gene ID" value="WBGene00006495"/>
    <property type="gene designation" value="cpna-1"/>
</dbReference>
<dbReference type="eggNOG" id="KOG1327">
    <property type="taxonomic scope" value="Eukaryota"/>
</dbReference>
<dbReference type="InParanoid" id="H2KYS8"/>
<dbReference type="OMA" id="MMRIFDE"/>
<dbReference type="OrthoDB" id="5855668at2759"/>
<dbReference type="PRO" id="PR:H2KYS8"/>
<dbReference type="Proteomes" id="UP000001940">
    <property type="component" value="Chromosome II"/>
</dbReference>
<dbReference type="Bgee" id="WBGene00006495">
    <property type="expression patterns" value="Expressed in larva and 3 other cell types or tissues"/>
</dbReference>
<dbReference type="GO" id="GO:0009925">
    <property type="term" value="C:basal plasma membrane"/>
    <property type="evidence" value="ECO:0007669"/>
    <property type="project" value="UniProtKB-SubCell"/>
</dbReference>
<dbReference type="GO" id="GO:0031430">
    <property type="term" value="C:M band"/>
    <property type="evidence" value="ECO:0000314"/>
    <property type="project" value="WormBase"/>
</dbReference>
<dbReference type="GO" id="GO:0005634">
    <property type="term" value="C:nucleus"/>
    <property type="evidence" value="ECO:0000318"/>
    <property type="project" value="GO_Central"/>
</dbReference>
<dbReference type="GO" id="GO:0055120">
    <property type="term" value="C:striated muscle dense body"/>
    <property type="evidence" value="ECO:0000314"/>
    <property type="project" value="WormBase"/>
</dbReference>
<dbReference type="GO" id="GO:0019902">
    <property type="term" value="F:phosphatase binding"/>
    <property type="evidence" value="ECO:0000353"/>
    <property type="project" value="UniProtKB"/>
</dbReference>
<dbReference type="GO" id="GO:0030674">
    <property type="term" value="F:protein-macromolecule adaptor activity"/>
    <property type="evidence" value="ECO:0000353"/>
    <property type="project" value="UniProtKB"/>
</dbReference>
<dbReference type="GO" id="GO:0004842">
    <property type="term" value="F:ubiquitin-protein transferase activity"/>
    <property type="evidence" value="ECO:0000318"/>
    <property type="project" value="GO_Central"/>
</dbReference>
<dbReference type="GO" id="GO:0060298">
    <property type="term" value="P:positive regulation of sarcomere organization"/>
    <property type="evidence" value="ECO:0000315"/>
    <property type="project" value="UniProtKB"/>
</dbReference>
<dbReference type="GO" id="GO:0016567">
    <property type="term" value="P:protein ubiquitination"/>
    <property type="evidence" value="ECO:0000318"/>
    <property type="project" value="GO_Central"/>
</dbReference>
<dbReference type="InterPro" id="IPR010734">
    <property type="entry name" value="Copine_C"/>
</dbReference>
<dbReference type="InterPro" id="IPR052079">
    <property type="entry name" value="E3_ligase/Copine_domain"/>
</dbReference>
<dbReference type="InterPro" id="IPR002035">
    <property type="entry name" value="VWF_A"/>
</dbReference>
<dbReference type="InterPro" id="IPR036465">
    <property type="entry name" value="vWFA_dom_sf"/>
</dbReference>
<dbReference type="PANTHER" id="PTHR45751">
    <property type="entry name" value="COPINE FAMILY PROTEIN 1"/>
    <property type="match status" value="1"/>
</dbReference>
<dbReference type="PANTHER" id="PTHR45751:SF48">
    <property type="entry name" value="COPINE FAMILY PROTEIN 1"/>
    <property type="match status" value="1"/>
</dbReference>
<dbReference type="Pfam" id="PF07002">
    <property type="entry name" value="Copine"/>
    <property type="match status" value="1"/>
</dbReference>
<dbReference type="SMART" id="SM00327">
    <property type="entry name" value="VWA"/>
    <property type="match status" value="1"/>
</dbReference>
<dbReference type="SUPFAM" id="SSF53300">
    <property type="entry name" value="vWA-like"/>
    <property type="match status" value="1"/>
</dbReference>
<organism evidence="8">
    <name type="scientific">Caenorhabditis elegans</name>
    <dbReference type="NCBI Taxonomy" id="6239"/>
    <lineage>
        <taxon>Eukaryota</taxon>
        <taxon>Metazoa</taxon>
        <taxon>Ecdysozoa</taxon>
        <taxon>Nematoda</taxon>
        <taxon>Chromadorea</taxon>
        <taxon>Rhabditida</taxon>
        <taxon>Rhabditina</taxon>
        <taxon>Rhabditomorpha</taxon>
        <taxon>Rhabditoidea</taxon>
        <taxon>Rhabditidae</taxon>
        <taxon>Peloderinae</taxon>
        <taxon>Caenorhabditis</taxon>
    </lineage>
</organism>
<comment type="function">
    <text evidence="4">Involved in the assembly of dense bodies and M lines during body wall muscle development. Acts by recruiting downstream of integrin-associated protein pat-6/actopaxin several dense bodies and M line components including unc-89, lim-9, scpl-1 and unc-96 to integrin-mediated attachment sites.</text>
</comment>
<comment type="subunit">
    <text evidence="4">May interact (via VWFA domain) with unc-89 (via Ig-like C2-type 1-3) and unc-96 (via C-terminus); cpna-1 binding sites for unc-89 and unc-96 are different. May interact with pat-6. May interact with lim-9 (via LIM domains) and with scpl-1 (via FCP1 homology domain).</text>
</comment>
<comment type="subcellular location">
    <subcellularLocation>
        <location evidence="4">Basal cell membrane</location>
        <topology evidence="6">Single-pass type I membrane protein</topology>
    </subcellularLocation>
    <subcellularLocation>
        <location evidence="4">Cytoplasm</location>
        <location evidence="4">Myofibril</location>
        <location evidence="4">Sarcomere</location>
        <location evidence="4">M line</location>
    </subcellularLocation>
    <text evidence="4">Colocalizes with unc-89, unc-112, pat-3 and pat-6 at the M-line and with alpha-actinin, unc-112, pat-3 and pat-6 in dense bodies. In body wall muscle cells, colocalizes with beta-integrin pat-3 at integrin adhesion sites.</text>
</comment>
<comment type="alternative products">
    <event type="alternative splicing"/>
    <isoform>
        <id>H2KYS8-1</id>
        <name evidence="10">b</name>
        <sequence type="displayed"/>
    </isoform>
    <isoform>
        <id>H2KYS8-2</id>
        <name evidence="9">a</name>
        <sequence type="described" ref="VSP_058737"/>
    </isoform>
    <isoform>
        <id>H2KYS8-3</id>
        <name evidence="11">c</name>
        <sequence type="described" ref="VSP_058734 VSP_058735"/>
    </isoform>
</comment>
<comment type="tissue specificity">
    <text evidence="4">Expressed in body wall muscles (at protein level).</text>
</comment>
<comment type="developmental stage">
    <text evidence="4">Expressed in embryos and in adults.</text>
</comment>
<comment type="disruption phenotype">
    <text evidence="4">Embryos stop elongation at the 2-fold stage and have defects in the organization of the myofibril lattice. pat-3, deb-1, pat-4 and pat-6 are slightly mislocalized in the post 1.5-fold stage. At the 1.5-fold stage, unc-89 and myo-3 localization is normal. However, at the 1.75- and 2-fold stages, unc-89 and myo-3 are mislocalized into large foci within muscle cells.</text>
</comment>
<comment type="similarity">
    <text evidence="6">Belongs to the copine family.</text>
</comment>
<reference evidence="8" key="1">
    <citation type="journal article" date="1998" name="Science">
        <title>Genome sequence of the nematode C. elegans: a platform for investigating biology.</title>
        <authorList>
            <consortium name="The C. elegans sequencing consortium"/>
        </authorList>
    </citation>
    <scope>NUCLEOTIDE SEQUENCE [LARGE SCALE GENOMIC DNA]</scope>
    <source>
        <strain evidence="8">Bristol N2</strain>
    </source>
</reference>
<reference evidence="6" key="2">
    <citation type="journal article" date="2013" name="Mol. Biol. Cell">
        <title>CPNA-1, a copine domain protein, is located at integrin adhesion sites and is required for myofilament stability in Caenorhabditis elegans.</title>
        <authorList>
            <person name="Warner A."/>
            <person name="Xiong G."/>
            <person name="Qadota H."/>
            <person name="Rogalski T."/>
            <person name="Vogl A.W."/>
            <person name="Moerman D.G."/>
            <person name="Benian G.M."/>
        </authorList>
    </citation>
    <scope>FUNCTION</scope>
    <scope>INTERACTION WITH UNC-89; UNC-96; PAT-6; LIM-9 AND SCPL-1</scope>
    <scope>SUBCELLULAR LOCATION</scope>
    <scope>TISSUE SPECIFICITY</scope>
    <scope>DEVELOPMENTAL STAGE</scope>
    <scope>DISRUPTION PHENOTYPE</scope>
</reference>
<evidence type="ECO:0000255" key="1"/>
<evidence type="ECO:0000255" key="2">
    <source>
        <dbReference type="PROSITE-ProRule" id="PRU00219"/>
    </source>
</evidence>
<evidence type="ECO:0000256" key="3">
    <source>
        <dbReference type="SAM" id="MobiDB-lite"/>
    </source>
</evidence>
<evidence type="ECO:0000269" key="4">
    <source>
    </source>
</evidence>
<evidence type="ECO:0000303" key="5">
    <source>
    </source>
</evidence>
<evidence type="ECO:0000305" key="6"/>
<evidence type="ECO:0000305" key="7">
    <source>
    </source>
</evidence>
<evidence type="ECO:0000312" key="8">
    <source>
        <dbReference type="Proteomes" id="UP000001940"/>
    </source>
</evidence>
<evidence type="ECO:0000312" key="9">
    <source>
        <dbReference type="WormBase" id="F31D5.3a"/>
    </source>
</evidence>
<evidence type="ECO:0000312" key="10">
    <source>
        <dbReference type="WormBase" id="F31D5.3b"/>
    </source>
</evidence>
<evidence type="ECO:0000312" key="11">
    <source>
        <dbReference type="WormBase" id="F31D5.3c"/>
    </source>
</evidence>
<accession>H2KYS8</accession>
<accession>H2KYS9</accession>
<accession>H2KYT0</accession>
<accession>Q7JPE2</accession>
<sequence length="1107" mass="124605">MVFDARLGYDPDEWEECPEPEHFLVFSGFTRYMLTFAAIAFVYYFFKLLDDKNKKESGEKEEPQTSVESVLAKAGDKLHDVKEQVQQHIPESAEELMREADQYLKEQAHSVQNNVHQFAEQAANKFPSLEVDLNLGHPIDATREKFDTVLSSVNNHLHETKNMDLSPTSRDSTQFEQIPSIAPEESAFGHDFEHVPPHLKTAAEQYYAQQHQPPPVPQHKIVQPVPISPTDQQLLHEFDIYDAPAHQRMNQISEQLGQLGQKTPAQLQQLQHAQLAHQQLQQQGVFQPIQQPSPLQIQTHPQQPYFDFSQLSPASQARYNQQQFVDISQLSPGAGALIAEQQASGAFQPVTKKLGREKRLSEQDERALQDWEKEKALLEADRLKKLLDHEVGGDSTDLDSSQKAYDHFAPASHISYESHSGAAQIQPMTPTAPKRADVPAPQVTSITNVRDSQLTDYDISDFHAHDEPHYHTVLTPQQLQQNQQQHQQPSAIDRRRTTADSDDYVKVSEPIYDYPPKGHEAPVAEPKRISPTEAAQLQELYQEYDLGLDLPGVAPIQGVAKPPVQQRTPLQIQQQVVQNVQNQPNMMARQNSVPESPRTVINVPISRKTDVPIQVQQQQNQFSYNVPIQVKDDPRNLATADLFVQDAQEYVAHQQNQQDKGSFVMEEEMLSLHEPETGSNKKKLTPKNPSFEATSRQVRTNDVFERIEHDEHDDMTYAPEIQSVEIPPDQMSETSENMIDYFDKVAAESEQQIQHLQEQQNTLKKQQIETSIPDSSLLKPVGRAPQILPAFGNRISSNSSLGSAGRSGSGVSSSDVYPYRHLRKQSSLLSVLGVTSMQEMLLAITSLDSLSEAMRKAGLETTNLIFGIDYTASNKYQGEESFGGRSLHTIHPHVTNPYQQVISILGRTLAPFAGQGRLGVYGFGDAKTGDWSVFNLKGEGGDCRSLDEVLNVYNTVTPTVALSGPTNFAPLIYQAMEICQKSRDYHILVIIADGQVTNERATRRAIVQACQHPLSIIVVGVGDGPWDMMRIFDESLPKRPWDNFHFVEFHEIVKKSTNMEDGDVKLAVQSLLEIPDQYRCICELGLLDRSIPPRGSEIRREMMHNPL</sequence>
<name>CPNA1_CAEEL</name>
<keyword id="KW-0025">Alternative splicing</keyword>
<keyword id="KW-1003">Cell membrane</keyword>
<keyword id="KW-0175">Coiled coil</keyword>
<keyword id="KW-0963">Cytoplasm</keyword>
<keyword id="KW-0472">Membrane</keyword>
<keyword id="KW-1185">Reference proteome</keyword>
<keyword id="KW-0812">Transmembrane</keyword>
<keyword id="KW-1133">Transmembrane helix</keyword>
<feature type="chain" id="PRO_0000438738" description="Copine family protein 1">
    <location>
        <begin position="1"/>
        <end position="1107"/>
    </location>
</feature>
<feature type="topological domain" description="Extracellular" evidence="6">
    <location>
        <begin position="1"/>
        <end position="22"/>
    </location>
</feature>
<feature type="transmembrane region" description="Helical" evidence="1">
    <location>
        <begin position="23"/>
        <end position="45"/>
    </location>
</feature>
<feature type="topological domain" description="Cytoplasmic" evidence="6">
    <location>
        <begin position="46"/>
        <end position="1107"/>
    </location>
</feature>
<feature type="domain" description="VWFA" evidence="2">
    <location>
        <begin position="863"/>
        <end position="1023"/>
    </location>
</feature>
<feature type="region of interest" description="Disordered" evidence="3">
    <location>
        <begin position="478"/>
        <end position="501"/>
    </location>
</feature>
<feature type="region of interest" description="Disordered" evidence="3">
    <location>
        <begin position="673"/>
        <end position="698"/>
    </location>
</feature>
<feature type="coiled-coil region" evidence="1">
    <location>
        <begin position="67"/>
        <end position="124"/>
    </location>
</feature>
<feature type="compositionally biased region" description="Low complexity" evidence="3">
    <location>
        <begin position="478"/>
        <end position="488"/>
    </location>
</feature>
<feature type="compositionally biased region" description="Basic and acidic residues" evidence="3">
    <location>
        <begin position="492"/>
        <end position="501"/>
    </location>
</feature>
<feature type="compositionally biased region" description="Polar residues" evidence="3">
    <location>
        <begin position="687"/>
        <end position="698"/>
    </location>
</feature>
<feature type="splice variant" id="VSP_058734" description="In isoform c." evidence="6">
    <original>RDSQLTDYDISDFHAHDEPHYHTVLTPQQLQQNQQ</original>
    <variation>GASTVAVVVGSGSGVGDVVGDVVDDVAFVEYVTVL</variation>
    <location>
        <begin position="450"/>
        <end position="484"/>
    </location>
</feature>
<feature type="splice variant" id="VSP_058735" description="In isoform c." evidence="6">
    <location>
        <begin position="485"/>
        <end position="1107"/>
    </location>
</feature>
<feature type="splice variant" id="VSP_058737" description="In isoform a." evidence="6">
    <original>QIETSIPDSSLLKPVGR</original>
    <variation>Q</variation>
    <location>
        <begin position="767"/>
        <end position="783"/>
    </location>
</feature>